<gene>
    <name evidence="1" type="primary">mscL</name>
    <name type="ordered locus">Cvib_0845</name>
</gene>
<accession>A4SEF1</accession>
<feature type="chain" id="PRO_1000076042" description="Large-conductance mechanosensitive channel">
    <location>
        <begin position="1"/>
        <end position="149"/>
    </location>
</feature>
<feature type="transmembrane region" description="Helical" evidence="1">
    <location>
        <begin position="14"/>
        <end position="34"/>
    </location>
</feature>
<feature type="transmembrane region" description="Helical" evidence="1">
    <location>
        <begin position="85"/>
        <end position="105"/>
    </location>
</feature>
<comment type="function">
    <text evidence="1">Channel that opens in response to stretch forces in the membrane lipid bilayer. May participate in the regulation of osmotic pressure changes within the cell.</text>
</comment>
<comment type="subunit">
    <text evidence="1">Homopentamer.</text>
</comment>
<comment type="subcellular location">
    <subcellularLocation>
        <location evidence="1">Cell inner membrane</location>
        <topology evidence="1">Multi-pass membrane protein</topology>
    </subcellularLocation>
</comment>
<comment type="similarity">
    <text evidence="1">Belongs to the MscL family.</text>
</comment>
<organism>
    <name type="scientific">Chlorobium phaeovibrioides (strain DSM 265 / 1930)</name>
    <name type="common">Prosthecochloris vibrioformis (strain DSM 265)</name>
    <dbReference type="NCBI Taxonomy" id="290318"/>
    <lineage>
        <taxon>Bacteria</taxon>
        <taxon>Pseudomonadati</taxon>
        <taxon>Chlorobiota</taxon>
        <taxon>Chlorobiia</taxon>
        <taxon>Chlorobiales</taxon>
        <taxon>Chlorobiaceae</taxon>
        <taxon>Chlorobium/Pelodictyon group</taxon>
        <taxon>Chlorobium</taxon>
    </lineage>
</organism>
<evidence type="ECO:0000255" key="1">
    <source>
        <dbReference type="HAMAP-Rule" id="MF_00115"/>
    </source>
</evidence>
<name>MSCL_CHLPM</name>
<keyword id="KW-0997">Cell inner membrane</keyword>
<keyword id="KW-1003">Cell membrane</keyword>
<keyword id="KW-0407">Ion channel</keyword>
<keyword id="KW-0406">Ion transport</keyword>
<keyword id="KW-0472">Membrane</keyword>
<keyword id="KW-0812">Transmembrane</keyword>
<keyword id="KW-1133">Transmembrane helix</keyword>
<keyword id="KW-0813">Transport</keyword>
<proteinExistence type="inferred from homology"/>
<dbReference type="EMBL" id="CP000607">
    <property type="protein sequence ID" value="ABP36860.1"/>
    <property type="molecule type" value="Genomic_DNA"/>
</dbReference>
<dbReference type="STRING" id="290318.Cvib_0845"/>
<dbReference type="KEGG" id="pvi:Cvib_0845"/>
<dbReference type="eggNOG" id="COG1970">
    <property type="taxonomic scope" value="Bacteria"/>
</dbReference>
<dbReference type="HOGENOM" id="CLU_095787_0_0_10"/>
<dbReference type="OrthoDB" id="9810350at2"/>
<dbReference type="GO" id="GO:0005886">
    <property type="term" value="C:plasma membrane"/>
    <property type="evidence" value="ECO:0007669"/>
    <property type="project" value="UniProtKB-SubCell"/>
</dbReference>
<dbReference type="GO" id="GO:0008381">
    <property type="term" value="F:mechanosensitive monoatomic ion channel activity"/>
    <property type="evidence" value="ECO:0007669"/>
    <property type="project" value="UniProtKB-UniRule"/>
</dbReference>
<dbReference type="Gene3D" id="1.10.1200.120">
    <property type="entry name" value="Large-conductance mechanosensitive channel, MscL, domain 1"/>
    <property type="match status" value="1"/>
</dbReference>
<dbReference type="HAMAP" id="MF_00115">
    <property type="entry name" value="MscL"/>
    <property type="match status" value="1"/>
</dbReference>
<dbReference type="InterPro" id="IPR019823">
    <property type="entry name" value="Mechanosensitive_channel_CS"/>
</dbReference>
<dbReference type="InterPro" id="IPR001185">
    <property type="entry name" value="MS_channel"/>
</dbReference>
<dbReference type="InterPro" id="IPR037673">
    <property type="entry name" value="MSC/AndL"/>
</dbReference>
<dbReference type="InterPro" id="IPR036019">
    <property type="entry name" value="MscL_channel"/>
</dbReference>
<dbReference type="NCBIfam" id="TIGR00220">
    <property type="entry name" value="mscL"/>
    <property type="match status" value="1"/>
</dbReference>
<dbReference type="NCBIfam" id="NF001843">
    <property type="entry name" value="PRK00567.1-4"/>
    <property type="match status" value="1"/>
</dbReference>
<dbReference type="PANTHER" id="PTHR30266:SF2">
    <property type="entry name" value="LARGE-CONDUCTANCE MECHANOSENSITIVE CHANNEL"/>
    <property type="match status" value="1"/>
</dbReference>
<dbReference type="PANTHER" id="PTHR30266">
    <property type="entry name" value="MECHANOSENSITIVE CHANNEL MSCL"/>
    <property type="match status" value="1"/>
</dbReference>
<dbReference type="Pfam" id="PF01741">
    <property type="entry name" value="MscL"/>
    <property type="match status" value="1"/>
</dbReference>
<dbReference type="PRINTS" id="PR01264">
    <property type="entry name" value="MECHCHANNEL"/>
</dbReference>
<dbReference type="SUPFAM" id="SSF81330">
    <property type="entry name" value="Gated mechanosensitive channel"/>
    <property type="match status" value="1"/>
</dbReference>
<dbReference type="PROSITE" id="PS01327">
    <property type="entry name" value="MSCL"/>
    <property type="match status" value="1"/>
</dbReference>
<sequence>MMKQFKEFAVRGNVVDMAVGIIVGGAFGKLVNTLVSDVMMPPLGFLTGGVDFTNLYFVLSEGSTPGPYAALEQARAAGAVTVNYGLFINAMISFIIMAFAVYLLVRGINSLRRKEEAAPPPSTKQCPFCLSTVPLKATRCPACTSGLEK</sequence>
<reference key="1">
    <citation type="submission" date="2007-03" db="EMBL/GenBank/DDBJ databases">
        <title>Complete sequence of Prosthecochloris vibrioformis DSM 265.</title>
        <authorList>
            <consortium name="US DOE Joint Genome Institute"/>
            <person name="Copeland A."/>
            <person name="Lucas S."/>
            <person name="Lapidus A."/>
            <person name="Barry K."/>
            <person name="Detter J.C."/>
            <person name="Glavina del Rio T."/>
            <person name="Hammon N."/>
            <person name="Israni S."/>
            <person name="Pitluck S."/>
            <person name="Schmutz J."/>
            <person name="Larimer F."/>
            <person name="Land M."/>
            <person name="Hauser L."/>
            <person name="Mikhailova N."/>
            <person name="Li T."/>
            <person name="Overmann J."/>
            <person name="Schuster S.C."/>
            <person name="Bryant D.A."/>
            <person name="Richardson P."/>
        </authorList>
    </citation>
    <scope>NUCLEOTIDE SEQUENCE [LARGE SCALE GENOMIC DNA]</scope>
    <source>
        <strain>DSM 265 / 1930</strain>
    </source>
</reference>
<protein>
    <recommendedName>
        <fullName evidence="1">Large-conductance mechanosensitive channel</fullName>
    </recommendedName>
</protein>